<organism>
    <name type="scientific">Methylobacillus flagellatus (strain ATCC 51484 / DSM 6875 / VKM B-1610 / KT)</name>
    <dbReference type="NCBI Taxonomy" id="265072"/>
    <lineage>
        <taxon>Bacteria</taxon>
        <taxon>Pseudomonadati</taxon>
        <taxon>Pseudomonadota</taxon>
        <taxon>Betaproteobacteria</taxon>
        <taxon>Nitrosomonadales</taxon>
        <taxon>Methylophilaceae</taxon>
        <taxon>Methylobacillus</taxon>
    </lineage>
</organism>
<accession>Q1H1P3</accession>
<keyword id="KW-1185">Reference proteome</keyword>
<keyword id="KW-0687">Ribonucleoprotein</keyword>
<keyword id="KW-0689">Ribosomal protein</keyword>
<keyword id="KW-0694">RNA-binding</keyword>
<keyword id="KW-0699">rRNA-binding</keyword>
<comment type="function">
    <text evidence="1">Binds together with bS18 to 16S ribosomal RNA.</text>
</comment>
<comment type="similarity">
    <text evidence="1">Belongs to the bacterial ribosomal protein bS6 family.</text>
</comment>
<evidence type="ECO:0000255" key="1">
    <source>
        <dbReference type="HAMAP-Rule" id="MF_00360"/>
    </source>
</evidence>
<evidence type="ECO:0000256" key="2">
    <source>
        <dbReference type="SAM" id="MobiDB-lite"/>
    </source>
</evidence>
<evidence type="ECO:0000305" key="3"/>
<protein>
    <recommendedName>
        <fullName evidence="1">Small ribosomal subunit protein bS6</fullName>
    </recommendedName>
    <alternativeName>
        <fullName evidence="3">30S ribosomal protein S6</fullName>
    </alternativeName>
</protein>
<reference key="1">
    <citation type="submission" date="2006-03" db="EMBL/GenBank/DDBJ databases">
        <title>Complete sequence of Methylobacillus flagellatus KT.</title>
        <authorList>
            <consortium name="US DOE Joint Genome Institute"/>
            <person name="Copeland A."/>
            <person name="Lucas S."/>
            <person name="Lapidus A."/>
            <person name="Barry K."/>
            <person name="Detter J.C."/>
            <person name="Glavina del Rio T."/>
            <person name="Hammon N."/>
            <person name="Israni S."/>
            <person name="Dalin E."/>
            <person name="Tice H."/>
            <person name="Pitluck S."/>
            <person name="Brettin T."/>
            <person name="Bruce D."/>
            <person name="Han C."/>
            <person name="Tapia R."/>
            <person name="Saunders E."/>
            <person name="Gilna P."/>
            <person name="Schmutz J."/>
            <person name="Larimer F."/>
            <person name="Land M."/>
            <person name="Kyrpides N."/>
            <person name="Anderson I."/>
            <person name="Richardson P."/>
        </authorList>
    </citation>
    <scope>NUCLEOTIDE SEQUENCE [LARGE SCALE GENOMIC DNA]</scope>
    <source>
        <strain>ATCC 51484 / DSM 6875 / VKM B-1610 / KT</strain>
    </source>
</reference>
<name>RS6_METFK</name>
<gene>
    <name evidence="1" type="primary">rpsF</name>
    <name type="ordered locus">Mfla_1326</name>
</gene>
<proteinExistence type="inferred from homology"/>
<feature type="chain" id="PRO_1000005295" description="Small ribosomal subunit protein bS6">
    <location>
        <begin position="1"/>
        <end position="131"/>
    </location>
</feature>
<feature type="region of interest" description="Disordered" evidence="2">
    <location>
        <begin position="96"/>
        <end position="131"/>
    </location>
</feature>
<feature type="compositionally biased region" description="Basic and acidic residues" evidence="2">
    <location>
        <begin position="103"/>
        <end position="117"/>
    </location>
</feature>
<feature type="compositionally biased region" description="Low complexity" evidence="2">
    <location>
        <begin position="118"/>
        <end position="131"/>
    </location>
</feature>
<dbReference type="EMBL" id="CP000284">
    <property type="protein sequence ID" value="ABE49594.1"/>
    <property type="molecule type" value="Genomic_DNA"/>
</dbReference>
<dbReference type="RefSeq" id="WP_011479548.1">
    <property type="nucleotide sequence ID" value="NC_007947.1"/>
</dbReference>
<dbReference type="SMR" id="Q1H1P3"/>
<dbReference type="STRING" id="265072.Mfla_1326"/>
<dbReference type="KEGG" id="mfa:Mfla_1326"/>
<dbReference type="eggNOG" id="COG0360">
    <property type="taxonomic scope" value="Bacteria"/>
</dbReference>
<dbReference type="HOGENOM" id="CLU_113441_6_1_4"/>
<dbReference type="OrthoDB" id="9812702at2"/>
<dbReference type="Proteomes" id="UP000002440">
    <property type="component" value="Chromosome"/>
</dbReference>
<dbReference type="GO" id="GO:0022627">
    <property type="term" value="C:cytosolic small ribosomal subunit"/>
    <property type="evidence" value="ECO:0007669"/>
    <property type="project" value="TreeGrafter"/>
</dbReference>
<dbReference type="GO" id="GO:0070181">
    <property type="term" value="F:small ribosomal subunit rRNA binding"/>
    <property type="evidence" value="ECO:0007669"/>
    <property type="project" value="TreeGrafter"/>
</dbReference>
<dbReference type="GO" id="GO:0003735">
    <property type="term" value="F:structural constituent of ribosome"/>
    <property type="evidence" value="ECO:0007669"/>
    <property type="project" value="InterPro"/>
</dbReference>
<dbReference type="GO" id="GO:0006412">
    <property type="term" value="P:translation"/>
    <property type="evidence" value="ECO:0007669"/>
    <property type="project" value="UniProtKB-UniRule"/>
</dbReference>
<dbReference type="CDD" id="cd00473">
    <property type="entry name" value="bS6"/>
    <property type="match status" value="1"/>
</dbReference>
<dbReference type="FunFam" id="3.30.70.60:FF:000003">
    <property type="entry name" value="30S ribosomal protein S6"/>
    <property type="match status" value="1"/>
</dbReference>
<dbReference type="Gene3D" id="3.30.70.60">
    <property type="match status" value="1"/>
</dbReference>
<dbReference type="HAMAP" id="MF_00360">
    <property type="entry name" value="Ribosomal_bS6"/>
    <property type="match status" value="1"/>
</dbReference>
<dbReference type="InterPro" id="IPR000529">
    <property type="entry name" value="Ribosomal_bS6"/>
</dbReference>
<dbReference type="InterPro" id="IPR035980">
    <property type="entry name" value="Ribosomal_bS6_sf"/>
</dbReference>
<dbReference type="InterPro" id="IPR020814">
    <property type="entry name" value="Ribosomal_S6_plastid/chlpt"/>
</dbReference>
<dbReference type="InterPro" id="IPR014717">
    <property type="entry name" value="Transl_elong_EF1B/ribsomal_bS6"/>
</dbReference>
<dbReference type="NCBIfam" id="TIGR00166">
    <property type="entry name" value="S6"/>
    <property type="match status" value="1"/>
</dbReference>
<dbReference type="PANTHER" id="PTHR21011">
    <property type="entry name" value="MITOCHONDRIAL 28S RIBOSOMAL PROTEIN S6"/>
    <property type="match status" value="1"/>
</dbReference>
<dbReference type="PANTHER" id="PTHR21011:SF1">
    <property type="entry name" value="SMALL RIBOSOMAL SUBUNIT PROTEIN BS6M"/>
    <property type="match status" value="1"/>
</dbReference>
<dbReference type="Pfam" id="PF01250">
    <property type="entry name" value="Ribosomal_S6"/>
    <property type="match status" value="1"/>
</dbReference>
<dbReference type="SUPFAM" id="SSF54995">
    <property type="entry name" value="Ribosomal protein S6"/>
    <property type="match status" value="1"/>
</dbReference>
<sequence length="131" mass="14844">MRHYEIVFIVHPDQSEQVPAMIERYRTLVTSNGGTIHRLEDWGRRQLAYPIQKIHKAHYVLMNIEVSQEVLNELEHAFKFNDAVLRHLTLNTDEAVTAPSPMMKEEKSKSLLAKDEAAAPAPAPATEQATA</sequence>